<feature type="chain" id="PRO_0000215604" description="UDP-N-acetylglucosamine transferase subunit ALG13">
    <location>
        <begin position="1"/>
        <end position="196"/>
    </location>
</feature>
<reference key="1">
    <citation type="journal article" date="2004" name="Nature">
        <title>Genome evolution in yeasts.</title>
        <authorList>
            <person name="Dujon B."/>
            <person name="Sherman D."/>
            <person name="Fischer G."/>
            <person name="Durrens P."/>
            <person name="Casaregola S."/>
            <person name="Lafontaine I."/>
            <person name="de Montigny J."/>
            <person name="Marck C."/>
            <person name="Neuveglise C."/>
            <person name="Talla E."/>
            <person name="Goffard N."/>
            <person name="Frangeul L."/>
            <person name="Aigle M."/>
            <person name="Anthouard V."/>
            <person name="Babour A."/>
            <person name="Barbe V."/>
            <person name="Barnay S."/>
            <person name="Blanchin S."/>
            <person name="Beckerich J.-M."/>
            <person name="Beyne E."/>
            <person name="Bleykasten C."/>
            <person name="Boisrame A."/>
            <person name="Boyer J."/>
            <person name="Cattolico L."/>
            <person name="Confanioleri F."/>
            <person name="de Daruvar A."/>
            <person name="Despons L."/>
            <person name="Fabre E."/>
            <person name="Fairhead C."/>
            <person name="Ferry-Dumazet H."/>
            <person name="Groppi A."/>
            <person name="Hantraye F."/>
            <person name="Hennequin C."/>
            <person name="Jauniaux N."/>
            <person name="Joyet P."/>
            <person name="Kachouri R."/>
            <person name="Kerrest A."/>
            <person name="Koszul R."/>
            <person name="Lemaire M."/>
            <person name="Lesur I."/>
            <person name="Ma L."/>
            <person name="Muller H."/>
            <person name="Nicaud J.-M."/>
            <person name="Nikolski M."/>
            <person name="Oztas S."/>
            <person name="Ozier-Kalogeropoulos O."/>
            <person name="Pellenz S."/>
            <person name="Potier S."/>
            <person name="Richard G.-F."/>
            <person name="Straub M.-L."/>
            <person name="Suleau A."/>
            <person name="Swennen D."/>
            <person name="Tekaia F."/>
            <person name="Wesolowski-Louvel M."/>
            <person name="Westhof E."/>
            <person name="Wirth B."/>
            <person name="Zeniou-Meyer M."/>
            <person name="Zivanovic Y."/>
            <person name="Bolotin-Fukuhara M."/>
            <person name="Thierry A."/>
            <person name="Bouchier C."/>
            <person name="Caudron B."/>
            <person name="Scarpelli C."/>
            <person name="Gaillardin C."/>
            <person name="Weissenbach J."/>
            <person name="Wincker P."/>
            <person name="Souciet J.-L."/>
        </authorList>
    </citation>
    <scope>NUCLEOTIDE SEQUENCE [LARGE SCALE GENOMIC DNA]</scope>
    <source>
        <strain>CLIB 122 / E 150</strain>
    </source>
</reference>
<protein>
    <recommendedName>
        <fullName>UDP-N-acetylglucosamine transferase subunit ALG13</fullName>
        <ecNumber>2.4.1.141</ecNumber>
    </recommendedName>
    <alternativeName>
        <fullName>Asparagine-linked glycosylation protein 13</fullName>
    </alternativeName>
</protein>
<accession>Q6C3P1</accession>
<proteinExistence type="inferred from homology"/>
<organism>
    <name type="scientific">Yarrowia lipolytica (strain CLIB 122 / E 150)</name>
    <name type="common">Yeast</name>
    <name type="synonym">Candida lipolytica</name>
    <dbReference type="NCBI Taxonomy" id="284591"/>
    <lineage>
        <taxon>Eukaryota</taxon>
        <taxon>Fungi</taxon>
        <taxon>Dikarya</taxon>
        <taxon>Ascomycota</taxon>
        <taxon>Saccharomycotina</taxon>
        <taxon>Dipodascomycetes</taxon>
        <taxon>Dipodascales</taxon>
        <taxon>Dipodascales incertae sedis</taxon>
        <taxon>Yarrowia</taxon>
    </lineage>
</organism>
<dbReference type="EC" id="2.4.1.141"/>
<dbReference type="EMBL" id="CR382131">
    <property type="protein sequence ID" value="CAG80325.1"/>
    <property type="molecule type" value="Genomic_DNA"/>
</dbReference>
<dbReference type="RefSeq" id="XP_504721.1">
    <property type="nucleotide sequence ID" value="XM_504721.1"/>
</dbReference>
<dbReference type="SMR" id="Q6C3P1"/>
<dbReference type="FunCoup" id="Q6C3P1">
    <property type="interactions" value="333"/>
</dbReference>
<dbReference type="STRING" id="284591.Q6C3P1"/>
<dbReference type="EnsemblFungi" id="CAG80325">
    <property type="protein sequence ID" value="CAG80325"/>
    <property type="gene ID" value="YALI0_E33275g"/>
</dbReference>
<dbReference type="KEGG" id="yli:2911943"/>
<dbReference type="VEuPathDB" id="FungiDB:YALI0_E33275g"/>
<dbReference type="HOGENOM" id="CLU_085408_2_0_1"/>
<dbReference type="InParanoid" id="Q6C3P1"/>
<dbReference type="OMA" id="MHREYLF"/>
<dbReference type="OrthoDB" id="89460at4891"/>
<dbReference type="Proteomes" id="UP000001300">
    <property type="component" value="Chromosome E"/>
</dbReference>
<dbReference type="GO" id="GO:0005783">
    <property type="term" value="C:endoplasmic reticulum"/>
    <property type="evidence" value="ECO:0007669"/>
    <property type="project" value="UniProtKB-SubCell"/>
</dbReference>
<dbReference type="GO" id="GO:0004577">
    <property type="term" value="F:N-acetylglucosaminyldiphosphodolichol N-acetylglucosaminyltransferase activity"/>
    <property type="evidence" value="ECO:0007669"/>
    <property type="project" value="UniProtKB-EC"/>
</dbReference>
<dbReference type="GO" id="GO:0006488">
    <property type="term" value="P:dolichol-linked oligosaccharide biosynthetic process"/>
    <property type="evidence" value="ECO:0007669"/>
    <property type="project" value="InterPro"/>
</dbReference>
<dbReference type="Gene3D" id="3.40.50.2000">
    <property type="entry name" value="Glycogen Phosphorylase B"/>
    <property type="match status" value="1"/>
</dbReference>
<dbReference type="InterPro" id="IPR039042">
    <property type="entry name" value="Alg13-like"/>
</dbReference>
<dbReference type="InterPro" id="IPR007235">
    <property type="entry name" value="Glyco_trans_28_C"/>
</dbReference>
<dbReference type="PANTHER" id="PTHR12867">
    <property type="entry name" value="GLYCOSYL TRANSFERASE-RELATED"/>
    <property type="match status" value="1"/>
</dbReference>
<dbReference type="PANTHER" id="PTHR12867:SF6">
    <property type="entry name" value="N-ACETYLGLUCOSAMINYLDIPHOSPHODOLICHOL N-ACETYLGLUCOSAMINYLTRANSFERASE"/>
    <property type="match status" value="1"/>
</dbReference>
<dbReference type="Pfam" id="PF04101">
    <property type="entry name" value="Glyco_tran_28_C"/>
    <property type="match status" value="1"/>
</dbReference>
<dbReference type="SUPFAM" id="SSF53756">
    <property type="entry name" value="UDP-Glycosyltransferase/glycogen phosphorylase"/>
    <property type="match status" value="1"/>
</dbReference>
<gene>
    <name type="primary">ALG13</name>
    <name type="ordered locus">YALI0E33275g</name>
</gene>
<comment type="function">
    <text evidence="1">Involved in protein N-glycosylation. Essential for the second step of the dolichol-linked oligosaccharide pathway (By similarity).</text>
</comment>
<comment type="catalytic activity">
    <reaction>
        <text>an N-acetyl-alpha-D-glucosaminyl-diphospho-di-trans,poly-cis-dolichol + UDP-N-acetyl-alpha-D-glucosamine = an N,N'-diacetylchitobiosyl-diphospho-di-trans,poly-cis-dolichol + UDP + H(+)</text>
        <dbReference type="Rhea" id="RHEA:23380"/>
        <dbReference type="Rhea" id="RHEA-COMP:19507"/>
        <dbReference type="Rhea" id="RHEA-COMP:19510"/>
        <dbReference type="ChEBI" id="CHEBI:15378"/>
        <dbReference type="ChEBI" id="CHEBI:57269"/>
        <dbReference type="ChEBI" id="CHEBI:57705"/>
        <dbReference type="ChEBI" id="CHEBI:58223"/>
        <dbReference type="ChEBI" id="CHEBI:58427"/>
        <dbReference type="EC" id="2.4.1.141"/>
    </reaction>
</comment>
<comment type="subunit">
    <text evidence="1">Heterodimer with ALG14 to form a functional enzyme.</text>
</comment>
<comment type="subcellular location">
    <subcellularLocation>
        <location evidence="1">Endoplasmic reticulum</location>
    </subcellularLocation>
</comment>
<comment type="similarity">
    <text evidence="2">Belongs to the glycosyltransferase 28 family.</text>
</comment>
<sequence length="196" mass="22071">MHESSALSKLYNWDCSVVFIILNIYTTMLVLVTTGGTVPFEALIELVLSHESITTLSQLGFSKMRVQYGRGNRHIFTKHHKEGVMSITGFEYTDDLAGEMSRAHLVISHAGTGSVLDALRIGKHPVVVVNSKLMDNHQIEIAEELFRKRHLLVSGDTDSVGFIKALKMHREYLFETLPDPEEGILQRIIEETVSFM</sequence>
<name>ALG13_YARLI</name>
<evidence type="ECO:0000250" key="1"/>
<evidence type="ECO:0000305" key="2"/>
<keyword id="KW-0256">Endoplasmic reticulum</keyword>
<keyword id="KW-0328">Glycosyltransferase</keyword>
<keyword id="KW-1185">Reference proteome</keyword>
<keyword id="KW-0808">Transferase</keyword>